<sequence>MEKVDEFLEYIKVSILDKSIVDTSLILSDRDGFVLGKIIDKSSSADNVIDNSLISTFSSATDQASKLHAGNNKSIVSFFEDRIIVHINVSNVILSIITDTESNVGLILGSQDDLIRSLTSLSNSIQSDIQDM</sequence>
<feature type="chain" id="PRO_0000356168" description="Ragulator complex protein LAMTOR3 homolog">
    <location>
        <begin position="1"/>
        <end position="132"/>
    </location>
</feature>
<reference key="1">
    <citation type="journal article" date="2002" name="Nature">
        <title>Sequence and analysis of chromosome 2 of Dictyostelium discoideum.</title>
        <authorList>
            <person name="Gloeckner G."/>
            <person name="Eichinger L."/>
            <person name="Szafranski K."/>
            <person name="Pachebat J.A."/>
            <person name="Bankier A.T."/>
            <person name="Dear P.H."/>
            <person name="Lehmann R."/>
            <person name="Baumgart C."/>
            <person name="Parra G."/>
            <person name="Abril J.F."/>
            <person name="Guigo R."/>
            <person name="Kumpf K."/>
            <person name="Tunggal B."/>
            <person name="Cox E.C."/>
            <person name="Quail M.A."/>
            <person name="Platzer M."/>
            <person name="Rosenthal A."/>
            <person name="Noegel A.A."/>
        </authorList>
    </citation>
    <scope>NUCLEOTIDE SEQUENCE [LARGE SCALE GENOMIC DNA]</scope>
    <source>
        <strain>AX4</strain>
    </source>
</reference>
<reference key="2">
    <citation type="journal article" date="2005" name="Nature">
        <title>The genome of the social amoeba Dictyostelium discoideum.</title>
        <authorList>
            <person name="Eichinger L."/>
            <person name="Pachebat J.A."/>
            <person name="Gloeckner G."/>
            <person name="Rajandream M.A."/>
            <person name="Sucgang R."/>
            <person name="Berriman M."/>
            <person name="Song J."/>
            <person name="Olsen R."/>
            <person name="Szafranski K."/>
            <person name="Xu Q."/>
            <person name="Tunggal B."/>
            <person name="Kummerfeld S."/>
            <person name="Madera M."/>
            <person name="Konfortov B.A."/>
            <person name="Rivero F."/>
            <person name="Bankier A.T."/>
            <person name="Lehmann R."/>
            <person name="Hamlin N."/>
            <person name="Davies R."/>
            <person name="Gaudet P."/>
            <person name="Fey P."/>
            <person name="Pilcher K."/>
            <person name="Chen G."/>
            <person name="Saunders D."/>
            <person name="Sodergren E.J."/>
            <person name="Davis P."/>
            <person name="Kerhornou A."/>
            <person name="Nie X."/>
            <person name="Hall N."/>
            <person name="Anjard C."/>
            <person name="Hemphill L."/>
            <person name="Bason N."/>
            <person name="Farbrother P."/>
            <person name="Desany B."/>
            <person name="Just E."/>
            <person name="Morio T."/>
            <person name="Rost R."/>
            <person name="Churcher C.M."/>
            <person name="Cooper J."/>
            <person name="Haydock S."/>
            <person name="van Driessche N."/>
            <person name="Cronin A."/>
            <person name="Goodhead I."/>
            <person name="Muzny D.M."/>
            <person name="Mourier T."/>
            <person name="Pain A."/>
            <person name="Lu M."/>
            <person name="Harper D."/>
            <person name="Lindsay R."/>
            <person name="Hauser H."/>
            <person name="James K.D."/>
            <person name="Quiles M."/>
            <person name="Madan Babu M."/>
            <person name="Saito T."/>
            <person name="Buchrieser C."/>
            <person name="Wardroper A."/>
            <person name="Felder M."/>
            <person name="Thangavelu M."/>
            <person name="Johnson D."/>
            <person name="Knights A."/>
            <person name="Loulseged H."/>
            <person name="Mungall K.L."/>
            <person name="Oliver K."/>
            <person name="Price C."/>
            <person name="Quail M.A."/>
            <person name="Urushihara H."/>
            <person name="Hernandez J."/>
            <person name="Rabbinowitsch E."/>
            <person name="Steffen D."/>
            <person name="Sanders M."/>
            <person name="Ma J."/>
            <person name="Kohara Y."/>
            <person name="Sharp S."/>
            <person name="Simmonds M.N."/>
            <person name="Spiegler S."/>
            <person name="Tivey A."/>
            <person name="Sugano S."/>
            <person name="White B."/>
            <person name="Walker D."/>
            <person name="Woodward J.R."/>
            <person name="Winckler T."/>
            <person name="Tanaka Y."/>
            <person name="Shaulsky G."/>
            <person name="Schleicher M."/>
            <person name="Weinstock G.M."/>
            <person name="Rosenthal A."/>
            <person name="Cox E.C."/>
            <person name="Chisholm R.L."/>
            <person name="Gibbs R.A."/>
            <person name="Loomis W.F."/>
            <person name="Platzer M."/>
            <person name="Kay R.R."/>
            <person name="Williams J.G."/>
            <person name="Dear P.H."/>
            <person name="Noegel A.A."/>
            <person name="Barrell B.G."/>
            <person name="Kuspa A."/>
        </authorList>
    </citation>
    <scope>NUCLEOTIDE SEQUENCE [LARGE SCALE GENOMIC DNA]</scope>
    <source>
        <strain>AX4</strain>
    </source>
</reference>
<gene>
    <name type="ORF">DDB_G0274833</name>
</gene>
<proteinExistence type="inferred from homology"/>
<keyword id="KW-1185">Reference proteome</keyword>
<evidence type="ECO:0000250" key="1"/>
<evidence type="ECO:0000305" key="2"/>
<dbReference type="EMBL" id="AAFI02000012">
    <property type="protein sequence ID" value="EAL70309.1"/>
    <property type="molecule type" value="Genomic_DNA"/>
</dbReference>
<dbReference type="RefSeq" id="XP_643998.1">
    <property type="nucleotide sequence ID" value="XM_638906.1"/>
</dbReference>
<dbReference type="SMR" id="Q86J23"/>
<dbReference type="FunCoup" id="Q86J23">
    <property type="interactions" value="43"/>
</dbReference>
<dbReference type="STRING" id="44689.Q86J23"/>
<dbReference type="PaxDb" id="44689-DDB0217502"/>
<dbReference type="EnsemblProtists" id="EAL70309">
    <property type="protein sequence ID" value="EAL70309"/>
    <property type="gene ID" value="DDB_G0274833"/>
</dbReference>
<dbReference type="GeneID" id="8619424"/>
<dbReference type="KEGG" id="ddi:DDB_G0274833"/>
<dbReference type="dictyBase" id="DDB_G0274833">
    <property type="gene designation" value="mapksp1"/>
</dbReference>
<dbReference type="VEuPathDB" id="AmoebaDB:DDB_G0274833"/>
<dbReference type="eggNOG" id="ENOG502SE9A">
    <property type="taxonomic scope" value="Eukaryota"/>
</dbReference>
<dbReference type="HOGENOM" id="CLU_1921023_0_0_1"/>
<dbReference type="InParanoid" id="Q86J23"/>
<dbReference type="OMA" id="RIIVHIN"/>
<dbReference type="PhylomeDB" id="Q86J23"/>
<dbReference type="Reactome" id="R-DDI-1632852">
    <property type="pathway name" value="Macroautophagy"/>
</dbReference>
<dbReference type="Reactome" id="R-DDI-165159">
    <property type="pathway name" value="MTOR signalling"/>
</dbReference>
<dbReference type="Reactome" id="R-DDI-166208">
    <property type="pathway name" value="mTORC1-mediated signalling"/>
</dbReference>
<dbReference type="Reactome" id="R-DDI-380972">
    <property type="pathway name" value="Energy dependent regulation of mTOR by LKB1-AMPK"/>
</dbReference>
<dbReference type="Reactome" id="R-DDI-5628897">
    <property type="pathway name" value="TP53 Regulates Metabolic Genes"/>
</dbReference>
<dbReference type="Reactome" id="R-DDI-5674135">
    <property type="pathway name" value="MAP2K and MAPK activation"/>
</dbReference>
<dbReference type="Reactome" id="R-DDI-6798695">
    <property type="pathway name" value="Neutrophil degranulation"/>
</dbReference>
<dbReference type="Reactome" id="R-DDI-8943724">
    <property type="pathway name" value="Regulation of PTEN gene transcription"/>
</dbReference>
<dbReference type="Reactome" id="R-DDI-9639288">
    <property type="pathway name" value="Amino acids regulate mTORC1"/>
</dbReference>
<dbReference type="PRO" id="PR:Q86J23"/>
<dbReference type="Proteomes" id="UP000002195">
    <property type="component" value="Chromosome 2"/>
</dbReference>
<dbReference type="GO" id="GO:0071986">
    <property type="term" value="C:Ragulator complex"/>
    <property type="evidence" value="ECO:0000318"/>
    <property type="project" value="GO_Central"/>
</dbReference>
<dbReference type="GO" id="GO:0019209">
    <property type="term" value="F:kinase activator activity"/>
    <property type="evidence" value="ECO:0000250"/>
    <property type="project" value="dictyBase"/>
</dbReference>
<dbReference type="GO" id="GO:0071230">
    <property type="term" value="P:cellular response to amino acid stimulus"/>
    <property type="evidence" value="ECO:0000318"/>
    <property type="project" value="GO_Central"/>
</dbReference>
<dbReference type="GO" id="GO:0043410">
    <property type="term" value="P:positive regulation of MAPK cascade"/>
    <property type="evidence" value="ECO:0000250"/>
    <property type="project" value="dictyBase"/>
</dbReference>
<dbReference type="GO" id="GO:0032008">
    <property type="term" value="P:positive regulation of TOR signaling"/>
    <property type="evidence" value="ECO:0000318"/>
    <property type="project" value="GO_Central"/>
</dbReference>
<dbReference type="FunFam" id="3.30.450.30:FF:000057">
    <property type="entry name" value="Ragulator complex protein LAMTOR3 homolog"/>
    <property type="match status" value="1"/>
</dbReference>
<dbReference type="Gene3D" id="3.30.450.30">
    <property type="entry name" value="Dynein light chain 2a, cytoplasmic"/>
    <property type="match status" value="1"/>
</dbReference>
<dbReference type="InterPro" id="IPR015019">
    <property type="entry name" value="LAMTOR3"/>
</dbReference>
<dbReference type="PANTHER" id="PTHR13378:SF1">
    <property type="entry name" value="RAGULATOR COMPLEX PROTEIN LAMTOR3"/>
    <property type="match status" value="1"/>
</dbReference>
<dbReference type="PANTHER" id="PTHR13378">
    <property type="entry name" value="REGULATOR COMPLEX PROTEIN LAMTOR3"/>
    <property type="match status" value="1"/>
</dbReference>
<dbReference type="Pfam" id="PF08923">
    <property type="entry name" value="MAPKK1_Int"/>
    <property type="match status" value="1"/>
</dbReference>
<dbReference type="SMART" id="SM01278">
    <property type="entry name" value="MAPKK1_Int"/>
    <property type="match status" value="1"/>
</dbReference>
<dbReference type="SUPFAM" id="SSF103196">
    <property type="entry name" value="Roadblock/LC7 domain"/>
    <property type="match status" value="1"/>
</dbReference>
<accession>Q86J23</accession>
<accession>Q555R5</accession>
<comment type="function">
    <text evidence="1">Regulator of the TOR pathway, a signaling cascade that promotes cell growth in response to growth factors, energy levels, and amino acids. May activate the TOR signaling cascade in response to amino acids (By similarity).</text>
</comment>
<comment type="subunit">
    <text evidence="1">Part of the Ragulator complex.</text>
</comment>
<comment type="similarity">
    <text evidence="2">Belongs to the LAMTOR3 family.</text>
</comment>
<organism>
    <name type="scientific">Dictyostelium discoideum</name>
    <name type="common">Social amoeba</name>
    <dbReference type="NCBI Taxonomy" id="44689"/>
    <lineage>
        <taxon>Eukaryota</taxon>
        <taxon>Amoebozoa</taxon>
        <taxon>Evosea</taxon>
        <taxon>Eumycetozoa</taxon>
        <taxon>Dictyostelia</taxon>
        <taxon>Dictyosteliales</taxon>
        <taxon>Dictyosteliaceae</taxon>
        <taxon>Dictyostelium</taxon>
    </lineage>
</organism>
<protein>
    <recommendedName>
        <fullName>Ragulator complex protein LAMTOR3 homolog</fullName>
    </recommendedName>
    <alternativeName>
        <fullName>Late endosomal/lysosomal adaptor and MAPK and MTOR activator 3</fullName>
    </alternativeName>
</protein>
<name>LTOR3_DICDI</name>